<comment type="function">
    <text evidence="4 9 10 11 14 16 17">Plays a role in vesicle-mediated secretory processes (PubMed:21732083). Required for normal accumulation of secretory vesicles in hippocampus, pituitary and pancreatic islets. Required for the accumulation of normal levels of insulin-containing vesicles and preventing their degradation (PubMed:15939893, PubMed:21732083). Plays a role in insulin secretion in response to glucose stimuli (PubMed:12031972, PubMed:21732083). Required for normal accumulation of the neurotransmitters norepinephrine, dopamine and serotonin in the brain (PubMed:16269463). In females, but not in males, required for normal accumulation and secretion of pituitary hormones, such as luteinizing hormone (LH) and follicle-stimulating hormone (FSH) (PubMed:16269463). Seems to lack intrinsic enzyme activity (PubMed:7980563, PubMed:8878556). Required to maintain normal levels of renin expression and renin release (PubMed:19019914). May regulate catalytic active protein-tyrosine phosphatases such as PTPRA through dimerization (PubMed:12364328).</text>
</comment>
<comment type="function">
    <molecule>ICA512-transmembrane fragment</molecule>
    <text evidence="4">ICA512-TMF regulates dynamics and exocytosis of insulin secretory granules (SGs); binding of ICA512-TMF to SNTB2/beta-2-syntrophin is proposed to restrain SGs mobility and exocytosis by tethering them to the actin cytoskeleton depending on UTRN; the function is inhibited by cytoplasmic ICA512-CFF dimerizing with ICA512-TMF and displacing SNTB2 (By similarity).</text>
</comment>
<comment type="function">
    <molecule>ICA512-cleaved cytosolic fragment</molecule>
    <text evidence="4 13">ICA512-CCF translocated to the nucleus promotes expression of insulin and other granule-related genes; the function implicates binding to and regulating activity of STAT5B probably by preventing its dephosphorylation and potentially by inducing its sumoylation by recruiting PIAS4 (By similarity). Enhances pancreatic beta-cell proliferation by converging with signaling by STAT5B and STAT3 (PubMed:18178618). ICA512-CCF located in the cytoplasm regulates dynamics and exocytosis of insulin secretory granules (SGs) by dimerizing with ICA512-TMF and displacing SNTB2 thus enhancing SGs mobility and exocytosis (By similarity).</text>
</comment>
<comment type="subunit">
    <text evidence="4 10">Homodimer; shown for the unprocessed protein (proICA512) in the endoplasmic reticulum and resolved during protein maturation as ICA512-TMF seems to be predominantly monomeric in secretory granules; however, ICA512-CCF interacts with ICA512-TMF disrupting the ICA512-TMF:SNTB2 complex. The isolated lumenal RESP18 homology domain has been shown to form disulfide-linked homooligomers. Interacts (via cytoplasmic domain) with phosphorylated SNTB2; this protects PTPRN against cleavage by CAPN1 to produce ICA512-CCF. Dephosphorylation of SNTB2 upon insulin stimulation disrupts the interaction and results in PTPRN cleavage. Interacts with SNX19. ICA512-CCF interacts with PIAS4; in the nucleus. Interacts with STAT5B (phosphorylated); down-regulated by ICA512-CCF sumoylation; ICA512-CCF prevents STAT5B dephosphorylation; ICA512-CCF mediates interaction of STAT5B with PIAS4. Interacts (via RESP18 homology domain) with insulin and proinsulin (By similarity). Interacts with PTPRN2, PTPRA and PTPRE (PubMed:12364328).</text>
</comment>
<comment type="interaction">
    <interactant intactId="EBI-8328895">
        <id>Q60673</id>
    </interactant>
    <interactant intactId="EBI-6597520">
        <id>P18052</id>
        <label>Ptpra</label>
    </interactant>
    <organismsDiffer>false</organismsDiffer>
    <experiments>3</experiments>
</comment>
<comment type="interaction">
    <interactant intactId="EBI-8328895">
        <id>Q60673</id>
    </interactant>
    <interactant intactId="EBI-8538944">
        <id>P80560</id>
        <label>Ptprn2</label>
    </interactant>
    <organismsDiffer>false</organismsDiffer>
    <experiments>4</experiments>
</comment>
<comment type="subcellular location">
    <subcellularLocation>
        <location evidence="5">Membrane</location>
        <topology evidence="5">Single-pass type I membrane protein</topology>
    </subcellularLocation>
    <subcellularLocation>
        <location evidence="15">Cytoplasmic vesicle</location>
        <location evidence="15">Secretory vesicle membrane</location>
        <topology evidence="18">Single-pass type I membrane protein</topology>
    </subcellularLocation>
    <subcellularLocation>
        <location evidence="5">Perikaryon</location>
    </subcellularLocation>
    <subcellularLocation>
        <location evidence="5">Cell projection</location>
        <location evidence="5">Axon</location>
    </subcellularLocation>
    <subcellularLocation>
        <location evidence="5">Synapse</location>
    </subcellularLocation>
    <subcellularLocation>
        <location evidence="5">Cell membrane</location>
        <topology evidence="5">Single-pass type I membrane protein</topology>
    </subcellularLocation>
    <subcellularLocation>
        <location evidence="5">Endosome</location>
    </subcellularLocation>
    <text evidence="5">Detected on neuronal secretory vesicles, but not on synaptic vesicles. Colocalizes with insulin-containing secretory granules. Primarily detected on secretory vesicle membranes. Transiently found at the cell membrane, when secretory vesicles fuse with the cell membrane to release their cargo. Is then endocytosed and recycled to secretory vesicles via the Golgi apparatus membranes.</text>
</comment>
<comment type="subcellular location">
    <molecule>ICA512-transmembrane fragment</molecule>
    <subcellularLocation>
        <location evidence="5">Cytoplasmic vesicle</location>
        <location evidence="5">Secretory vesicle membrane</location>
    </subcellularLocation>
</comment>
<comment type="subcellular location">
    <molecule>ICA512-cleaved cytosolic fragment</molecule>
    <subcellularLocation>
        <location evidence="4">Nucleus</location>
    </subcellularLocation>
</comment>
<comment type="tissue specificity">
    <text evidence="9 12 15 16">Detected in pituitary (PubMed:16269463). Detected in brain (at protein level) (PubMed:12031972, PubMed:16269463, PubMed:19361477). Detected in brain (PubMed:12031972, PubMed:7980563). Weakly expressed in the colon, intestine, stomach and pancreas (PubMed:7980563).</text>
</comment>
<comment type="domain">
    <text evidence="4">The RESP18 homology domain is sufficient for targeting proICA512 to secretory granules.</text>
</comment>
<comment type="PTM">
    <text evidence="2 4 5">Subject to proteolytic cleavage at multiple sites. Subject to cleavage on a pair of basic residues. On exocytosis of secretory granules in pancreatic beta-cells ICA512-TMF is transiently inserted in the plasma-membrane and cleaved by mu-type calpain CPN1 to yield ICA512-CCF.</text>
</comment>
<comment type="PTM">
    <text evidence="4">O-glycosylated.</text>
</comment>
<comment type="PTM">
    <text evidence="4">N-glycosylated.</text>
</comment>
<comment type="PTM">
    <text evidence="4">Sumoylated at two sites including Lys-754. Sumoylation decreases interaction with STAT5.</text>
</comment>
<comment type="disruption phenotype">
    <text evidence="9 12">Mice are born at the expected Mendelian rate, appear healthy and normal, but show impaired glucose tolerance and impaired insulin secretion in response to glucose (PubMed:12031972). Pancreatic islets from mice lacking both Ptprn and Ptprn2 contain decreased numbers of insulin-containing vesicles and show a further decrease in insulin secretion after glucose stimuli (PubMed:21732083). Mice lacking both Ptprn and Ptprn2 appear normal, but have lower levels of the neurotransmitters norepinephrine, dopamine and serotonin in the brain. Likewise, they have decreased numbers of synaptic vesicles in the hippocampus and show decreased neurotransmitter release after K(+) stimulation; basal levels of neurotransmitter release are unaffected. They show increased anxiety-like behavior with strongly decreased exploratory activity and rearing. Besides, they show defects in remembering conditioned learning. With increasing age, mutant mice develop a tendency to suffer seizures and display a reduced life span; roughly half of the mutant mice are dead after 40 weeks (PubMed:19361477). The majority of female mice deficient in both Ptprn and Ptprn2 are infertile or have small litters, due to abnormalities of the estrous cycle and absence of corpora lutea. These defects are due to decreased levels of luteinizing hormone and follicle-stimulating hormone (FSH) in the pituitary and decreased levels of luteinizing hormone (LH) in the blood plasma. In contrast, male mice lacking both Ptprn and Ptprn2 display normal hormone levels and normal fertility (PubMed:16269463).</text>
</comment>
<comment type="similarity">
    <text evidence="18">Belongs to the protein-tyrosine phosphatase family. Receptor class 8 subfamily.</text>
</comment>
<comment type="caution">
    <text evidence="19">Does not possess catalytic activity due to replacement of highly conserved residues in tyrosine-protein phosphatase domain.</text>
</comment>
<comment type="sequence caution" evidence="18">
    <conflict type="erroneous initiation">
        <sequence resource="EMBL-CDS" id="CAA52453"/>
    </conflict>
</comment>
<keyword id="KW-1003">Cell membrane</keyword>
<keyword id="KW-0966">Cell projection</keyword>
<keyword id="KW-0968">Cytoplasmic vesicle</keyword>
<keyword id="KW-1015">Disulfide bond</keyword>
<keyword id="KW-0967">Endosome</keyword>
<keyword id="KW-0325">Glycoprotein</keyword>
<keyword id="KW-1017">Isopeptide bond</keyword>
<keyword id="KW-0472">Membrane</keyword>
<keyword id="KW-0539">Nucleus</keyword>
<keyword id="KW-0597">Phosphoprotein</keyword>
<keyword id="KW-0675">Receptor</keyword>
<keyword id="KW-1185">Reference proteome</keyword>
<keyword id="KW-0732">Signal</keyword>
<keyword id="KW-0770">Synapse</keyword>
<keyword id="KW-0804">Transcription</keyword>
<keyword id="KW-0805">Transcription regulation</keyword>
<keyword id="KW-0812">Transmembrane</keyword>
<keyword id="KW-1133">Transmembrane helix</keyword>
<keyword id="KW-0832">Ubl conjugation</keyword>
<sequence length="979" mass="106083">MRRPRRPGGSGGSGGSGGLRLLVCLLLLSGRPGGCSAISAHGCLFDRRLCSHLEVCIQDGLFGQCQAGVGQARPLLQVTSPVLQRLQGVLRQLMSQGLSWHDDLTQHVISQEMERIPRLRPPEPHPRDRSGLVPRKPGPAGELLTQGNPTGSSPAAQGFPRPAGGRSWGGSPLSSLQAELLPPLLEHLLMPPQPPHPALTYEPALLQPYLFHQFGSRDGSRGSESSSGVVGVGHLSKAEGPALFSRSASKAILGTHSGHSFGDLTGPSPAQLFQDSGLLYMAQELPVPGRARAPRLPENGGNRAEDSSEGHEEEVLGGRGEKSPPQAAQPELSLQRLTAVLAGYGVELRQLTPEQFSTLLTLLQLLPKGTGRNLEGAVNVGGADVKKTIQQMQRGDPAEALPPTPSLPGYLTASPASSEVQQVLSPGFPEPPHTPSPLGSSSVLLEKKSPLGQSQPTVVGRPSARPSAEEYGYIVTDQKPLSLVAGVRLLEILAEHVHMSSGSFINISVVGPAVTFRIRHNEQNLSLADVTQQAGLVKSELEAQTGLQILQTGVGQREEAAEVLPRQAHGISPMRSVLLTLVALAGVAGLLVALAVALCMRHHSRQRDKERLAALGPEGAHGDTTFEYQDLCRQHMATKSLFNRAEGQPEPSRVSSVSSQFSDAAQASPSSHSSTPSWCEEPAQANMDISTGHMILAYMEDHLRNRDRLAKEWQALCAYQAEPNTCAAAQDESNIKKNRHPDFLPYDHARIKLKVESSPSRSDYINASPIIEHDPRMPAYIATQGPLSHTIADFWQMVWESGCTVIVMLTPLVEDGVKQCDRYWPDEGSSLYHVYEVNLVSEHIWCEDFLVRSFYLKNLQTQETRTLTQFHFLSWPAEGTPASTRPLLDFRRKVNKCYRGRSCPIIVHCSDGAGRTGTYILIDMVLNRMAKGVKEIDIAATLEHVRDQRPGLVRSKDQFEFALTAVAEEVNAILKALPQ</sequence>
<proteinExistence type="evidence at protein level"/>
<dbReference type="EMBL" id="U11812">
    <property type="protein sequence ID" value="AAA52102.1"/>
    <property type="molecule type" value="mRNA"/>
</dbReference>
<dbReference type="EMBL" id="X74438">
    <property type="protein sequence ID" value="CAA52453.1"/>
    <property type="status" value="ALT_INIT"/>
    <property type="molecule type" value="mRNA"/>
</dbReference>
<dbReference type="EMBL" id="AC166150">
    <property type="status" value="NOT_ANNOTATED_CDS"/>
    <property type="molecule type" value="Genomic_DNA"/>
</dbReference>
<dbReference type="PIR" id="I48721">
    <property type="entry name" value="I48721"/>
</dbReference>
<dbReference type="PIR" id="JC2349">
    <property type="entry name" value="JC2349"/>
</dbReference>
<dbReference type="SMR" id="Q60673"/>
<dbReference type="FunCoup" id="Q60673">
    <property type="interactions" value="333"/>
</dbReference>
<dbReference type="IntAct" id="Q60673">
    <property type="interactions" value="4"/>
</dbReference>
<dbReference type="MINT" id="Q60673"/>
<dbReference type="STRING" id="10090.ENSMUSP00000027404"/>
<dbReference type="GlyConnect" id="2672">
    <property type="glycosylation" value="1 N-Linked glycan (1 site)"/>
</dbReference>
<dbReference type="GlyCosmos" id="Q60673">
    <property type="glycosylation" value="2 sites, 1 glycan"/>
</dbReference>
<dbReference type="GlyGen" id="Q60673">
    <property type="glycosylation" value="5 sites, 2 N-linked glycans (1 site), 1 O-linked glycan (1 site)"/>
</dbReference>
<dbReference type="iPTMnet" id="Q60673"/>
<dbReference type="PhosphoSitePlus" id="Q60673"/>
<dbReference type="PaxDb" id="10090-ENSMUSP00000027404"/>
<dbReference type="ProteomicsDB" id="301948"/>
<dbReference type="UCSC" id="uc011wnn.1">
    <property type="organism name" value="mouse"/>
</dbReference>
<dbReference type="AGR" id="MGI:102765"/>
<dbReference type="MGI" id="MGI:102765">
    <property type="gene designation" value="Ptprn"/>
</dbReference>
<dbReference type="eggNOG" id="KOG0793">
    <property type="taxonomic scope" value="Eukaryota"/>
</dbReference>
<dbReference type="InParanoid" id="Q60673"/>
<dbReference type="ChiTaRS" id="Ptprn">
    <property type="organism name" value="mouse"/>
</dbReference>
<dbReference type="PRO" id="PR:Q60673"/>
<dbReference type="Proteomes" id="UP000000589">
    <property type="component" value="Unplaced"/>
</dbReference>
<dbReference type="RNAct" id="Q60673">
    <property type="molecule type" value="protein"/>
</dbReference>
<dbReference type="GO" id="GO:0043679">
    <property type="term" value="C:axon terminus"/>
    <property type="evidence" value="ECO:0000250"/>
    <property type="project" value="UniProtKB"/>
</dbReference>
<dbReference type="GO" id="GO:0005768">
    <property type="term" value="C:endosome"/>
    <property type="evidence" value="ECO:0000250"/>
    <property type="project" value="UniProtKB"/>
</dbReference>
<dbReference type="GO" id="GO:0005794">
    <property type="term" value="C:Golgi apparatus"/>
    <property type="evidence" value="ECO:0000250"/>
    <property type="project" value="UniProtKB"/>
</dbReference>
<dbReference type="GO" id="GO:0043025">
    <property type="term" value="C:neuronal cell body"/>
    <property type="evidence" value="ECO:0000250"/>
    <property type="project" value="UniProtKB"/>
</dbReference>
<dbReference type="GO" id="GO:0005634">
    <property type="term" value="C:nucleus"/>
    <property type="evidence" value="ECO:0007669"/>
    <property type="project" value="UniProtKB-SubCell"/>
</dbReference>
<dbReference type="GO" id="GO:0043204">
    <property type="term" value="C:perikaryon"/>
    <property type="evidence" value="ECO:0007669"/>
    <property type="project" value="UniProtKB-SubCell"/>
</dbReference>
<dbReference type="GO" id="GO:0005886">
    <property type="term" value="C:plasma membrane"/>
    <property type="evidence" value="ECO:0000250"/>
    <property type="project" value="UniProtKB"/>
</dbReference>
<dbReference type="GO" id="GO:0030141">
    <property type="term" value="C:secretory granule"/>
    <property type="evidence" value="ECO:0000250"/>
    <property type="project" value="UniProtKB"/>
</dbReference>
<dbReference type="GO" id="GO:0045202">
    <property type="term" value="C:synapse"/>
    <property type="evidence" value="ECO:0000250"/>
    <property type="project" value="UniProtKB"/>
</dbReference>
<dbReference type="GO" id="GO:0030658">
    <property type="term" value="C:transport vesicle membrane"/>
    <property type="evidence" value="ECO:0007669"/>
    <property type="project" value="UniProtKB-SubCell"/>
</dbReference>
<dbReference type="GO" id="GO:0035773">
    <property type="term" value="P:insulin secretion involved in cellular response to glucose stimulus"/>
    <property type="evidence" value="ECO:0000315"/>
    <property type="project" value="UniProtKB"/>
</dbReference>
<dbReference type="GO" id="GO:0001553">
    <property type="term" value="P:luteinization"/>
    <property type="evidence" value="ECO:0000315"/>
    <property type="project" value="UniProtKB"/>
</dbReference>
<dbReference type="GO" id="GO:1904692">
    <property type="term" value="P:positive regulation of type B pancreatic cell proliferation"/>
    <property type="evidence" value="ECO:0000315"/>
    <property type="project" value="UniProtKB"/>
</dbReference>
<dbReference type="GO" id="GO:0000302">
    <property type="term" value="P:response to reactive oxygen species"/>
    <property type="evidence" value="ECO:0000250"/>
    <property type="project" value="UniProtKB"/>
</dbReference>
<dbReference type="CDD" id="cd14609">
    <property type="entry name" value="R-PTP-N"/>
    <property type="match status" value="1"/>
</dbReference>
<dbReference type="FunFam" id="3.30.70.2470:FF:000001">
    <property type="entry name" value="receptor-type tyrosine-protein phosphatase-like N isoform X1"/>
    <property type="match status" value="1"/>
</dbReference>
<dbReference type="FunFam" id="3.90.190.10:FF:000017">
    <property type="entry name" value="receptor-type tyrosine-protein phosphatase-like N isoform X2"/>
    <property type="match status" value="1"/>
</dbReference>
<dbReference type="Gene3D" id="3.90.190.10">
    <property type="entry name" value="Protein tyrosine phosphatase superfamily"/>
    <property type="match status" value="1"/>
</dbReference>
<dbReference type="Gene3D" id="3.30.70.2470">
    <property type="entry name" value="Protein-tyrosine phosphatase receptor IA-2 ectodomain"/>
    <property type="match status" value="1"/>
</dbReference>
<dbReference type="InterPro" id="IPR033522">
    <property type="entry name" value="IA-2/IA-2_beta"/>
</dbReference>
<dbReference type="InterPro" id="IPR029021">
    <property type="entry name" value="Prot-tyrosine_phosphatase-like"/>
</dbReference>
<dbReference type="InterPro" id="IPR000242">
    <property type="entry name" value="PTP_cat"/>
</dbReference>
<dbReference type="InterPro" id="IPR021613">
    <property type="entry name" value="Receptor_IA-2_dom"/>
</dbReference>
<dbReference type="InterPro" id="IPR038112">
    <property type="entry name" value="Receptor_IA-2_ectodomain_sf"/>
</dbReference>
<dbReference type="InterPro" id="IPR029403">
    <property type="entry name" value="RESP18_dom"/>
</dbReference>
<dbReference type="InterPro" id="IPR016130">
    <property type="entry name" value="Tyr_Pase_AS"/>
</dbReference>
<dbReference type="InterPro" id="IPR003595">
    <property type="entry name" value="Tyr_Pase_cat"/>
</dbReference>
<dbReference type="InterPro" id="IPR000387">
    <property type="entry name" value="Tyr_Pase_dom"/>
</dbReference>
<dbReference type="PANTHER" id="PTHR46106">
    <property type="entry name" value="IA-2 PROTEIN TYROSINE PHOSPHATASE, ISOFORM C"/>
    <property type="match status" value="1"/>
</dbReference>
<dbReference type="PANTHER" id="PTHR46106:SF1">
    <property type="entry name" value="RECEPTOR-TYPE TYROSINE-PROTEIN PHOSPHATASE-LIKE N"/>
    <property type="match status" value="1"/>
</dbReference>
<dbReference type="Pfam" id="PF11548">
    <property type="entry name" value="Receptor_IA-2"/>
    <property type="match status" value="1"/>
</dbReference>
<dbReference type="Pfam" id="PF14948">
    <property type="entry name" value="RESP18"/>
    <property type="match status" value="1"/>
</dbReference>
<dbReference type="Pfam" id="PF00102">
    <property type="entry name" value="Y_phosphatase"/>
    <property type="match status" value="1"/>
</dbReference>
<dbReference type="PRINTS" id="PR00700">
    <property type="entry name" value="PRTYPHPHTASE"/>
</dbReference>
<dbReference type="SMART" id="SM00194">
    <property type="entry name" value="PTPc"/>
    <property type="match status" value="1"/>
</dbReference>
<dbReference type="SMART" id="SM00404">
    <property type="entry name" value="PTPc_motif"/>
    <property type="match status" value="1"/>
</dbReference>
<dbReference type="SMART" id="SM01305">
    <property type="entry name" value="RESP18"/>
    <property type="match status" value="1"/>
</dbReference>
<dbReference type="SUPFAM" id="SSF52799">
    <property type="entry name" value="(Phosphotyrosine protein) phosphatases II"/>
    <property type="match status" value="1"/>
</dbReference>
<dbReference type="PROSITE" id="PS00383">
    <property type="entry name" value="TYR_PHOSPHATASE_1"/>
    <property type="match status" value="1"/>
</dbReference>
<dbReference type="PROSITE" id="PS50056">
    <property type="entry name" value="TYR_PHOSPHATASE_2"/>
    <property type="match status" value="1"/>
</dbReference>
<dbReference type="PROSITE" id="PS50055">
    <property type="entry name" value="TYR_PHOSPHATASE_PTP"/>
    <property type="match status" value="1"/>
</dbReference>
<feature type="signal peptide" evidence="1">
    <location>
        <begin position="1"/>
        <end position="37"/>
    </location>
</feature>
<feature type="chain" id="PRO_0000025452" description="Receptor-type tyrosine-protein phosphatase-like N">
    <location>
        <begin position="38"/>
        <end position="979"/>
    </location>
</feature>
<feature type="chain" id="PRO_0000438082" description="ICA512-N-terminal fragment" evidence="2 4">
    <location>
        <begin position="38"/>
        <end position="448"/>
    </location>
</feature>
<feature type="chain" id="PRO_0000438083" description="ICA512-transmembrane fragment" evidence="2 4">
    <location>
        <begin position="449"/>
        <end position="979"/>
    </location>
</feature>
<feature type="chain" id="PRO_0000438084" description="ICA512-cleaved cytosolic fragment" evidence="4">
    <location>
        <begin position="659"/>
        <end position="979"/>
    </location>
</feature>
<feature type="topological domain" description="Lumenal" evidence="6">
    <location>
        <begin position="38"/>
        <end position="575"/>
    </location>
</feature>
<feature type="transmembrane region" description="Helical" evidence="6">
    <location>
        <begin position="576"/>
        <end position="600"/>
    </location>
</feature>
<feature type="topological domain" description="Cytoplasmic" evidence="6">
    <location>
        <begin position="601"/>
        <end position="979"/>
    </location>
</feature>
<feature type="domain" description="Tyrosine-protein phosphatase" evidence="7">
    <location>
        <begin position="709"/>
        <end position="969"/>
    </location>
</feature>
<feature type="region of interest" description="RESP18 homology domain" evidence="4">
    <location>
        <begin position="38"/>
        <end position="134"/>
    </location>
</feature>
<feature type="region of interest" description="Disordered" evidence="8">
    <location>
        <begin position="113"/>
        <end position="173"/>
    </location>
</feature>
<feature type="region of interest" description="Disordered" evidence="8">
    <location>
        <begin position="289"/>
        <end position="330"/>
    </location>
</feature>
<feature type="region of interest" description="Disordered" evidence="8">
    <location>
        <begin position="392"/>
        <end position="443"/>
    </location>
</feature>
<feature type="region of interest" description="Sufficient for dimerization of proICA512" evidence="4">
    <location>
        <begin position="449"/>
        <end position="575"/>
    </location>
</feature>
<feature type="region of interest" description="Sufficient for dimerization of proICA512" evidence="3">
    <location>
        <begin position="601"/>
        <end position="732"/>
    </location>
</feature>
<feature type="region of interest" description="Disordered" evidence="8">
    <location>
        <begin position="644"/>
        <end position="680"/>
    </location>
</feature>
<feature type="compositionally biased region" description="Basic and acidic residues" evidence="8">
    <location>
        <begin position="113"/>
        <end position="130"/>
    </location>
</feature>
<feature type="compositionally biased region" description="Polar residues" evidence="8">
    <location>
        <begin position="145"/>
        <end position="155"/>
    </location>
</feature>
<feature type="compositionally biased region" description="Basic and acidic residues" evidence="8">
    <location>
        <begin position="303"/>
        <end position="322"/>
    </location>
</feature>
<feature type="compositionally biased region" description="Polar residues" evidence="8">
    <location>
        <begin position="414"/>
        <end position="424"/>
    </location>
</feature>
<feature type="compositionally biased region" description="Low complexity" evidence="8">
    <location>
        <begin position="648"/>
        <end position="677"/>
    </location>
</feature>
<feature type="site" description="Cleavage" evidence="2">
    <location>
        <begin position="448"/>
        <end position="449"/>
    </location>
</feature>
<feature type="modified residue" description="Phosphoserine" evidence="20">
    <location>
        <position position="307"/>
    </location>
</feature>
<feature type="modified residue" description="Phosphoserine" evidence="20">
    <location>
        <position position="308"/>
    </location>
</feature>
<feature type="glycosylation site" description="N-linked (GlcNAc...) asparagine" evidence="6">
    <location>
        <position position="506"/>
    </location>
</feature>
<feature type="glycosylation site" description="N-linked (GlcNAc...) asparagine" evidence="6">
    <location>
        <position position="524"/>
    </location>
</feature>
<feature type="disulfide bond" description="Interchain (with C-43 or C-50); in multimeric form" evidence="4">
    <location>
        <position position="43"/>
    </location>
</feature>
<feature type="disulfide bond" description="Interchain (with C-43 or C-50); in multimeric form" evidence="4">
    <location>
        <position position="50"/>
    </location>
</feature>
<feature type="disulfide bond" evidence="4">
    <location>
        <begin position="56"/>
        <end position="65"/>
    </location>
</feature>
<feature type="cross-link" description="Glycyl lysine isopeptide (Lys-Gly) (interchain with G-Cter in SUMO)" evidence="4">
    <location>
        <position position="754"/>
    </location>
</feature>
<feature type="mutagenesis site" description="No effect on dephosphorylating activity; increased the dephosphorylating efficiency; when associated with 911-A." evidence="17">
    <original>A</original>
    <variation>D</variation>
    <location>
        <position position="877"/>
    </location>
</feature>
<feature type="mutagenesis site" description="Confers dephosphorylating activity; increased the dephosphorylating efficiency; when associated with 877-D." evidence="17">
    <original>D</original>
    <variation>A</variation>
    <location>
        <position position="911"/>
    </location>
</feature>
<feature type="sequence conflict" description="In Ref. 2; CAA52453." evidence="18" ref="2">
    <original>RSWG</original>
    <variation>GDGAGA</variation>
    <location>
        <begin position="166"/>
        <end position="169"/>
    </location>
</feature>
<feature type="sequence conflict" description="In Ref. 1; AAA52102." evidence="18" ref="1">
    <original>L</original>
    <variation>M</variation>
    <location>
        <position position="363"/>
    </location>
</feature>
<feature type="sequence conflict" description="In Ref. 2; CAA52453." evidence="18" ref="2">
    <original>L</original>
    <variation>V</variation>
    <location>
        <position position="615"/>
    </location>
</feature>
<feature type="sequence conflict" description="In Ref. 1; AAA52102." evidence="18" ref="1">
    <original>T</original>
    <variation>S</variation>
    <location>
        <position position="675"/>
    </location>
</feature>
<feature type="sequence conflict" description="In Ref. 2; CAA52453." evidence="18" ref="2">
    <original>L</original>
    <variation>V</variation>
    <location>
        <position position="859"/>
    </location>
</feature>
<accession>Q60673</accession>
<accession>E9Q746</accession>
<accession>Q62129</accession>
<name>PTPRN_MOUSE</name>
<evidence type="ECO:0000250" key="1"/>
<evidence type="ECO:0000250" key="2">
    <source>
        <dbReference type="UniProtKB" id="P56722"/>
    </source>
</evidence>
<evidence type="ECO:0000250" key="3">
    <source>
        <dbReference type="UniProtKB" id="P80560"/>
    </source>
</evidence>
<evidence type="ECO:0000250" key="4">
    <source>
        <dbReference type="UniProtKB" id="Q16849"/>
    </source>
</evidence>
<evidence type="ECO:0000250" key="5">
    <source>
        <dbReference type="UniProtKB" id="Q63259"/>
    </source>
</evidence>
<evidence type="ECO:0000255" key="6"/>
<evidence type="ECO:0000255" key="7">
    <source>
        <dbReference type="PROSITE-ProRule" id="PRU00160"/>
    </source>
</evidence>
<evidence type="ECO:0000256" key="8">
    <source>
        <dbReference type="SAM" id="MobiDB-lite"/>
    </source>
</evidence>
<evidence type="ECO:0000269" key="9">
    <source>
    </source>
</evidence>
<evidence type="ECO:0000269" key="10">
    <source>
    </source>
</evidence>
<evidence type="ECO:0000269" key="11">
    <source>
    </source>
</evidence>
<evidence type="ECO:0000269" key="12">
    <source>
    </source>
</evidence>
<evidence type="ECO:0000269" key="13">
    <source>
    </source>
</evidence>
<evidence type="ECO:0000269" key="14">
    <source>
    </source>
</evidence>
<evidence type="ECO:0000269" key="15">
    <source>
    </source>
</evidence>
<evidence type="ECO:0000269" key="16">
    <source>
    </source>
</evidence>
<evidence type="ECO:0000269" key="17">
    <source>
    </source>
</evidence>
<evidence type="ECO:0000305" key="18"/>
<evidence type="ECO:0000305" key="19">
    <source>
    </source>
</evidence>
<evidence type="ECO:0007744" key="20">
    <source>
    </source>
</evidence>
<organism>
    <name type="scientific">Mus musculus</name>
    <name type="common">Mouse</name>
    <dbReference type="NCBI Taxonomy" id="10090"/>
    <lineage>
        <taxon>Eukaryota</taxon>
        <taxon>Metazoa</taxon>
        <taxon>Chordata</taxon>
        <taxon>Craniata</taxon>
        <taxon>Vertebrata</taxon>
        <taxon>Euteleostomi</taxon>
        <taxon>Mammalia</taxon>
        <taxon>Eutheria</taxon>
        <taxon>Euarchontoglires</taxon>
        <taxon>Glires</taxon>
        <taxon>Rodentia</taxon>
        <taxon>Myomorpha</taxon>
        <taxon>Muroidea</taxon>
        <taxon>Muridae</taxon>
        <taxon>Murinae</taxon>
        <taxon>Mus</taxon>
        <taxon>Mus</taxon>
    </lineage>
</organism>
<protein>
    <recommendedName>
        <fullName>Receptor-type tyrosine-protein phosphatase-like N</fullName>
        <shortName>R-PTP-N</shortName>
    </recommendedName>
    <alternativeName>
        <fullName evidence="18">PTP IA-2</fullName>
    </alternativeName>
    <component>
        <recommendedName>
            <fullName>ICA512-N-terminal fragment</fullName>
            <shortName>ICA512-NTF</shortName>
        </recommendedName>
    </component>
    <component>
        <recommendedName>
            <fullName>ICA512-transmembrane fragment</fullName>
            <shortName>ICA512-TMF</shortName>
        </recommendedName>
    </component>
    <component>
        <recommendedName>
            <fullName>ICA512-cleaved cytosolic fragment</fullName>
            <shortName>ICA512-CCF</shortName>
        </recommendedName>
    </component>
</protein>
<reference key="1">
    <citation type="journal article" date="1994" name="Biochem. Biophys. Res. Commun.">
        <title>Isolation, sequence and expression of a novel mouse brain cDNA, mIA-2, and its relatedness to members of the protein tyrosine phosphatase family.</title>
        <authorList>
            <person name="Lu J."/>
            <person name="Notkins A.L."/>
            <person name="Lan M.S."/>
        </authorList>
    </citation>
    <scope>NUCLEOTIDE SEQUENCE [MRNA]</scope>
    <scope>LACK OF FUNCTION AS PROTEIN TYROSINE PHOSPHATASE</scope>
    <scope>TISSUE SPECIFICITY</scope>
    <source>
        <tissue>Brain</tissue>
    </source>
</reference>
<reference key="2">
    <citation type="journal article" date="1995" name="Biochem. Biophys. Res. Commun.">
        <title>Expression of PTP35, the murine homologue of the protein tyrosine phosphatase-related sequence IA-2, is regulated during cell growth and stimulated by mitogens in 3T3 fibroblasts.</title>
        <authorList>
            <person name="Magistrelli G."/>
            <person name="Covini N."/>
            <person name="Mosca M."/>
            <person name="Lippoli G."/>
            <person name="Isacchi A."/>
        </authorList>
    </citation>
    <scope>NUCLEOTIDE SEQUENCE [MRNA]</scope>
    <source>
        <strain>Swiss Webster</strain>
        <tissue>Fibroblast</tissue>
    </source>
</reference>
<reference key="3">
    <citation type="journal article" date="2009" name="PLoS Biol.">
        <title>Lineage-specific biology revealed by a finished genome assembly of the mouse.</title>
        <authorList>
            <person name="Church D.M."/>
            <person name="Goodstadt L."/>
            <person name="Hillier L.W."/>
            <person name="Zody M.C."/>
            <person name="Goldstein S."/>
            <person name="She X."/>
            <person name="Bult C.J."/>
            <person name="Agarwala R."/>
            <person name="Cherry J.L."/>
            <person name="DiCuccio M."/>
            <person name="Hlavina W."/>
            <person name="Kapustin Y."/>
            <person name="Meric P."/>
            <person name="Maglott D."/>
            <person name="Birtle Z."/>
            <person name="Marques A.C."/>
            <person name="Graves T."/>
            <person name="Zhou S."/>
            <person name="Teague B."/>
            <person name="Potamousis K."/>
            <person name="Churas C."/>
            <person name="Place M."/>
            <person name="Herschleb J."/>
            <person name="Runnheim R."/>
            <person name="Forrest D."/>
            <person name="Amos-Landgraf J."/>
            <person name="Schwartz D.C."/>
            <person name="Cheng Z."/>
            <person name="Lindblad-Toh K."/>
            <person name="Eichler E.E."/>
            <person name="Ponting C.P."/>
        </authorList>
    </citation>
    <scope>NUCLEOTIDE SEQUENCE [LARGE SCALE GENOMIC DNA]</scope>
    <source>
        <strain>C57BL/6J</strain>
    </source>
</reference>
<reference key="4">
    <citation type="journal article" date="1996" name="Biochem. Biophys. Res. Commun.">
        <title>Substitution of two variant residues in the protein tyrosine phosphatase-like PTP35/IA-2 sequence reconstitutes catalytic activity.</title>
        <authorList>
            <person name="Magistrelli G."/>
            <person name="Toma S."/>
            <person name="Isacchi A."/>
        </authorList>
    </citation>
    <scope>LACK OF FUNCTION AS PROTEIN TYROSINE PHOSPHATASE</scope>
    <scope>MUTAGENESIS OF ALA-877 AND ASP-911</scope>
</reference>
<reference key="5">
    <citation type="journal article" date="2002" name="Diabetes">
        <title>Targeted disruption of the protein tyrosine phosphatase-like molecule IA-2 results in alterations in glucose tolerance tests and insulin secretion.</title>
        <authorList>
            <person name="Saeki K."/>
            <person name="Zhu M."/>
            <person name="Kubosaki A."/>
            <person name="Xie J."/>
            <person name="Lan M.S."/>
            <person name="Notkins A.L."/>
        </authorList>
    </citation>
    <scope>DISRUPTION PHENOTYPE</scope>
    <scope>FUNCTION</scope>
    <scope>TISSUE SPECIFICITY</scope>
</reference>
<reference key="6">
    <citation type="journal article" date="2002" name="J. Biol. Chem.">
        <title>Multimerization of the protein-tyrosine phosphatase (PTP)-like insulin-dependent diabetes mellitus autoantigens IA-2 and IA-2beta with receptor PTPs (RPTPs). Inhibition of RPTPalpha enzymatic activity.</title>
        <authorList>
            <person name="Gross S."/>
            <person name="Blanchetot C."/>
            <person name="Schepens J."/>
            <person name="Albet S."/>
            <person name="Lammers R."/>
            <person name="den Hertog J."/>
            <person name="Hendriks W."/>
        </authorList>
    </citation>
    <scope>FUNCTION</scope>
    <scope>SELF-ASSOCIATION</scope>
    <scope>INTERACTION WITH PTPRN2; PTPRA AND PTPRE</scope>
</reference>
<reference key="7">
    <citation type="journal article" date="2005" name="Proc. Natl. Acad. Sci. U.S.A.">
        <title>The dense core transmembrane vesicle protein IA-2 is a regulator of vesicle number and insulin secretion.</title>
        <authorList>
            <person name="Harashima S."/>
            <person name="Clark A."/>
            <person name="Christie M.R."/>
            <person name="Notkins A.L."/>
        </authorList>
    </citation>
    <scope>FUNCTION</scope>
</reference>
<reference key="8">
    <citation type="journal article" date="2006" name="Endocrinology">
        <title>Disruption of the transmembrane dense core vesicle proteins IA-2 and IA-2beta causes female infertility.</title>
        <authorList>
            <person name="Kubosaki A."/>
            <person name="Nakamura S."/>
            <person name="Clark A."/>
            <person name="Morris J.F."/>
            <person name="Notkins A.L."/>
        </authorList>
    </citation>
    <scope>DISRUPTION PHENOTYPE</scope>
    <scope>FUNCTION</scope>
    <scope>TISSUE SPECIFICITY</scope>
</reference>
<reference key="9">
    <citation type="journal article" date="2008" name="Proc. Natl. Acad. Sci. U.S.A.">
        <title>ICA512 signaling enhances pancreatic beta-cell proliferation by regulating cyclins D through STATs.</title>
        <authorList>
            <person name="Mziaut H."/>
            <person name="Kersting S."/>
            <person name="Knoch K.P."/>
            <person name="Fan W.H."/>
            <person name="Trajkovski M."/>
            <person name="Erdmann K."/>
            <person name="Bergert H."/>
            <person name="Ehehalt F."/>
            <person name="Saeger H.D."/>
            <person name="Solimena M."/>
        </authorList>
    </citation>
    <scope>FUNCTION</scope>
</reference>
<reference key="10">
    <citation type="journal article" date="2009" name="Am. J. Physiol.">
        <title>Dense-core vesicle proteins IA-2 and IA-2{beta} affect renin synthesis and secretion through the {beta}-adrenergic pathway.</title>
        <authorList>
            <person name="Kim S.M."/>
            <person name="Theilig F."/>
            <person name="Qin Y."/>
            <person name="Cai T."/>
            <person name="Mizel D."/>
            <person name="Faulhaber-Walter R."/>
            <person name="Hirai H."/>
            <person name="Bachmann S."/>
            <person name="Briggs J.P."/>
            <person name="Notkins A.L."/>
            <person name="Schnermann J."/>
        </authorList>
    </citation>
    <scope>FUNCTION</scope>
</reference>
<reference key="11">
    <citation type="journal article" date="2009" name="Neuroscience">
        <title>Disturbances in the secretion of neurotransmitters in IA-2/IA-2beta null mice: changes in behavior, learning and lifespan.</title>
        <authorList>
            <person name="Nishimura T."/>
            <person name="Kubosaki A."/>
            <person name="Ito Y."/>
            <person name="Notkins A.L."/>
        </authorList>
    </citation>
    <scope>DISRUPTION PHENOTYPE</scope>
    <scope>FUNCTION</scope>
    <scope>SUBCELLULAR LOCATION</scope>
    <scope>TISSUE SPECIFICITY</scope>
</reference>
<reference key="12">
    <citation type="journal article" date="2010" name="Cell">
        <title>A tissue-specific atlas of mouse protein phosphorylation and expression.</title>
        <authorList>
            <person name="Huttlin E.L."/>
            <person name="Jedrychowski M.P."/>
            <person name="Elias J.E."/>
            <person name="Goswami T."/>
            <person name="Rad R."/>
            <person name="Beausoleil S.A."/>
            <person name="Villen J."/>
            <person name="Haas W."/>
            <person name="Sowa M.E."/>
            <person name="Gygi S.P."/>
        </authorList>
    </citation>
    <scope>PHOSPHORYLATION [LARGE SCALE ANALYSIS] AT SER-307 AND SER-308</scope>
    <scope>IDENTIFICATION BY MASS SPECTROMETRY [LARGE SCALE ANALYSIS]</scope>
    <source>
        <tissue>Brain</tissue>
    </source>
</reference>
<reference key="13">
    <citation type="journal article" date="2011" name="Diabetologia">
        <title>Deletion of Ia-2 and/or Ia-2beta in mice decreases insulin secretion by reducing the number of dense core vesicles.</title>
        <authorList>
            <person name="Cai T."/>
            <person name="Hirai H."/>
            <person name="Zhang G."/>
            <person name="Zhang M."/>
            <person name="Takahashi N."/>
            <person name="Kasai H."/>
            <person name="Satin L.S."/>
            <person name="Leapman R.D."/>
            <person name="Notkins A.L."/>
        </authorList>
    </citation>
    <scope>DISRUPTION PHENOTYPE</scope>
    <scope>FUNCTION</scope>
</reference>
<gene>
    <name type="primary">Ptprn</name>
    <name type="synonym">Ptp35</name>
</gene>